<organism>
    <name type="scientific">Limosilactobacillus reuteri subsp. reuteri (strain JCM 1112)</name>
    <name type="common">Lactobacillus reuteri</name>
    <dbReference type="NCBI Taxonomy" id="557433"/>
    <lineage>
        <taxon>Bacteria</taxon>
        <taxon>Bacillati</taxon>
        <taxon>Bacillota</taxon>
        <taxon>Bacilli</taxon>
        <taxon>Lactobacillales</taxon>
        <taxon>Lactobacillaceae</taxon>
        <taxon>Limosilactobacillus</taxon>
    </lineage>
</organism>
<comment type="function">
    <text evidence="1">An essential GTPase which binds GTP, GDP and possibly (p)ppGpp with moderate affinity, with high nucleotide exchange rates and a fairly low GTP hydrolysis rate. Plays a role in control of the cell cycle, stress response, ribosome biogenesis and in those bacteria that undergo differentiation, in morphogenesis control.</text>
</comment>
<comment type="cofactor">
    <cofactor evidence="1">
        <name>Mg(2+)</name>
        <dbReference type="ChEBI" id="CHEBI:18420"/>
    </cofactor>
</comment>
<comment type="subunit">
    <text evidence="1">Monomer.</text>
</comment>
<comment type="subcellular location">
    <subcellularLocation>
        <location evidence="1">Cytoplasm</location>
    </subcellularLocation>
</comment>
<comment type="similarity">
    <text evidence="1">Belongs to the TRAFAC class OBG-HflX-like GTPase superfamily. OBG GTPase family.</text>
</comment>
<accession>B2G6R9</accession>
<evidence type="ECO:0000255" key="1">
    <source>
        <dbReference type="HAMAP-Rule" id="MF_01454"/>
    </source>
</evidence>
<evidence type="ECO:0000255" key="2">
    <source>
        <dbReference type="PROSITE-ProRule" id="PRU01229"/>
    </source>
</evidence>
<evidence type="ECO:0000255" key="3">
    <source>
        <dbReference type="PROSITE-ProRule" id="PRU01231"/>
    </source>
</evidence>
<sequence>MNMFVDQIKIEVHAGKGGDGMVAFRREKYVPNGGPAGGDGGRGGSIILKVDEGLRTLMDFRYHRIFKAKNGGNGMSKQMTGPSAEDTIIAVPQGTTVRDLDTGKIIGDLVEKDQELVVAKGGRGGRGNIHFASAKNPAPEIAENGEPGEDHYLELELKMLADVGLIGFPSVGKSTLLSVVTGAKPKIAAYEFTTLTPNLGMVMLPDGRDFAMADMPGLIEGASKGIGLGLKFLRHIERTRVLLHLVDMSSEDPHQAIERYRQINKELADYDPELLKRPQIVVATKMDLPNSADNLAAFKADLAADKTLEKQPEIFPISAVTHQGVQQLMQLTADLLDKTPAFDSESHDKELVAEYRAAAPDKKDEADFTITKDEDGTWVLGGEKLIRLFKMTDLTHEESQLRFARQLRHMGVDDALRAKGVQDGDLVRIEKFVFEFIQ</sequence>
<protein>
    <recommendedName>
        <fullName evidence="1">GTPase Obg</fullName>
        <ecNumber evidence="1">3.6.5.-</ecNumber>
    </recommendedName>
    <alternativeName>
        <fullName evidence="1">GTP-binding protein Obg</fullName>
    </alternativeName>
</protein>
<keyword id="KW-0963">Cytoplasm</keyword>
<keyword id="KW-0342">GTP-binding</keyword>
<keyword id="KW-0378">Hydrolase</keyword>
<keyword id="KW-0460">Magnesium</keyword>
<keyword id="KW-0479">Metal-binding</keyword>
<keyword id="KW-0547">Nucleotide-binding</keyword>
<name>OBG_LIMRJ</name>
<dbReference type="EC" id="3.6.5.-" evidence="1"/>
<dbReference type="EMBL" id="AP007281">
    <property type="protein sequence ID" value="BAG25151.1"/>
    <property type="molecule type" value="Genomic_DNA"/>
</dbReference>
<dbReference type="SMR" id="B2G6R9"/>
<dbReference type="KEGG" id="lrf:LAR_0635"/>
<dbReference type="HOGENOM" id="CLU_011747_2_1_9"/>
<dbReference type="GO" id="GO:0005737">
    <property type="term" value="C:cytoplasm"/>
    <property type="evidence" value="ECO:0007669"/>
    <property type="project" value="UniProtKB-SubCell"/>
</dbReference>
<dbReference type="GO" id="GO:0005525">
    <property type="term" value="F:GTP binding"/>
    <property type="evidence" value="ECO:0007669"/>
    <property type="project" value="UniProtKB-UniRule"/>
</dbReference>
<dbReference type="GO" id="GO:0003924">
    <property type="term" value="F:GTPase activity"/>
    <property type="evidence" value="ECO:0007669"/>
    <property type="project" value="UniProtKB-UniRule"/>
</dbReference>
<dbReference type="GO" id="GO:0000287">
    <property type="term" value="F:magnesium ion binding"/>
    <property type="evidence" value="ECO:0007669"/>
    <property type="project" value="InterPro"/>
</dbReference>
<dbReference type="GO" id="GO:0042254">
    <property type="term" value="P:ribosome biogenesis"/>
    <property type="evidence" value="ECO:0007669"/>
    <property type="project" value="UniProtKB-UniRule"/>
</dbReference>
<dbReference type="CDD" id="cd01898">
    <property type="entry name" value="Obg"/>
    <property type="match status" value="1"/>
</dbReference>
<dbReference type="FunFam" id="2.70.210.12:FF:000001">
    <property type="entry name" value="GTPase Obg"/>
    <property type="match status" value="1"/>
</dbReference>
<dbReference type="Gene3D" id="3.30.300.350">
    <property type="entry name" value="GTP-binding protein OBG, C-terminal domain"/>
    <property type="match status" value="1"/>
</dbReference>
<dbReference type="Gene3D" id="2.70.210.12">
    <property type="entry name" value="GTP1/OBG domain"/>
    <property type="match status" value="1"/>
</dbReference>
<dbReference type="Gene3D" id="3.40.50.300">
    <property type="entry name" value="P-loop containing nucleotide triphosphate hydrolases"/>
    <property type="match status" value="1"/>
</dbReference>
<dbReference type="HAMAP" id="MF_01454">
    <property type="entry name" value="GTPase_Obg"/>
    <property type="match status" value="1"/>
</dbReference>
<dbReference type="InterPro" id="IPR031167">
    <property type="entry name" value="G_OBG"/>
</dbReference>
<dbReference type="InterPro" id="IPR006073">
    <property type="entry name" value="GTP-bd"/>
</dbReference>
<dbReference type="InterPro" id="IPR014100">
    <property type="entry name" value="GTP-bd_Obg/CgtA"/>
</dbReference>
<dbReference type="InterPro" id="IPR036346">
    <property type="entry name" value="GTP-bd_prot_GTP1/OBG_C_sf"/>
</dbReference>
<dbReference type="InterPro" id="IPR006074">
    <property type="entry name" value="GTP1-OBG_CS"/>
</dbReference>
<dbReference type="InterPro" id="IPR006169">
    <property type="entry name" value="GTP1_OBG_dom"/>
</dbReference>
<dbReference type="InterPro" id="IPR036726">
    <property type="entry name" value="GTP1_OBG_dom_sf"/>
</dbReference>
<dbReference type="InterPro" id="IPR045086">
    <property type="entry name" value="OBG_GTPase"/>
</dbReference>
<dbReference type="InterPro" id="IPR015349">
    <property type="entry name" value="OCT_dom"/>
</dbReference>
<dbReference type="InterPro" id="IPR027417">
    <property type="entry name" value="P-loop_NTPase"/>
</dbReference>
<dbReference type="NCBIfam" id="TIGR02729">
    <property type="entry name" value="Obg_CgtA"/>
    <property type="match status" value="1"/>
</dbReference>
<dbReference type="NCBIfam" id="TIGR03595">
    <property type="entry name" value="Obg_CgtA_exten"/>
    <property type="match status" value="1"/>
</dbReference>
<dbReference type="NCBIfam" id="NF008954">
    <property type="entry name" value="PRK12296.1"/>
    <property type="match status" value="1"/>
</dbReference>
<dbReference type="NCBIfam" id="NF008955">
    <property type="entry name" value="PRK12297.1"/>
    <property type="match status" value="1"/>
</dbReference>
<dbReference type="NCBIfam" id="NF008956">
    <property type="entry name" value="PRK12299.1"/>
    <property type="match status" value="1"/>
</dbReference>
<dbReference type="PANTHER" id="PTHR11702">
    <property type="entry name" value="DEVELOPMENTALLY REGULATED GTP-BINDING PROTEIN-RELATED"/>
    <property type="match status" value="1"/>
</dbReference>
<dbReference type="PANTHER" id="PTHR11702:SF31">
    <property type="entry name" value="MITOCHONDRIAL RIBOSOME-ASSOCIATED GTPASE 2"/>
    <property type="match status" value="1"/>
</dbReference>
<dbReference type="Pfam" id="PF09269">
    <property type="entry name" value="DUF1967"/>
    <property type="match status" value="1"/>
</dbReference>
<dbReference type="Pfam" id="PF01018">
    <property type="entry name" value="GTP1_OBG"/>
    <property type="match status" value="1"/>
</dbReference>
<dbReference type="Pfam" id="PF01926">
    <property type="entry name" value="MMR_HSR1"/>
    <property type="match status" value="1"/>
</dbReference>
<dbReference type="PIRSF" id="PIRSF002401">
    <property type="entry name" value="GTP_bd_Obg/CgtA"/>
    <property type="match status" value="1"/>
</dbReference>
<dbReference type="PRINTS" id="PR00326">
    <property type="entry name" value="GTP1OBG"/>
</dbReference>
<dbReference type="SUPFAM" id="SSF102741">
    <property type="entry name" value="Obg GTP-binding protein C-terminal domain"/>
    <property type="match status" value="1"/>
</dbReference>
<dbReference type="SUPFAM" id="SSF82051">
    <property type="entry name" value="Obg GTP-binding protein N-terminal domain"/>
    <property type="match status" value="1"/>
</dbReference>
<dbReference type="SUPFAM" id="SSF52540">
    <property type="entry name" value="P-loop containing nucleoside triphosphate hydrolases"/>
    <property type="match status" value="1"/>
</dbReference>
<dbReference type="PROSITE" id="PS51710">
    <property type="entry name" value="G_OBG"/>
    <property type="match status" value="1"/>
</dbReference>
<dbReference type="PROSITE" id="PS00905">
    <property type="entry name" value="GTP1_OBG"/>
    <property type="match status" value="1"/>
</dbReference>
<dbReference type="PROSITE" id="PS51883">
    <property type="entry name" value="OBG"/>
    <property type="match status" value="1"/>
</dbReference>
<dbReference type="PROSITE" id="PS51881">
    <property type="entry name" value="OCT"/>
    <property type="match status" value="1"/>
</dbReference>
<gene>
    <name evidence="1" type="primary">obg</name>
    <name type="ordered locus">LAR_0635</name>
</gene>
<feature type="chain" id="PRO_0000386001" description="GTPase Obg">
    <location>
        <begin position="1"/>
        <end position="438"/>
    </location>
</feature>
<feature type="domain" description="Obg" evidence="3">
    <location>
        <begin position="2"/>
        <end position="160"/>
    </location>
</feature>
<feature type="domain" description="OBG-type G" evidence="1">
    <location>
        <begin position="161"/>
        <end position="337"/>
    </location>
</feature>
<feature type="domain" description="OCT" evidence="2">
    <location>
        <begin position="360"/>
        <end position="438"/>
    </location>
</feature>
<feature type="binding site" evidence="1">
    <location>
        <begin position="167"/>
        <end position="174"/>
    </location>
    <ligand>
        <name>GTP</name>
        <dbReference type="ChEBI" id="CHEBI:37565"/>
    </ligand>
</feature>
<feature type="binding site" evidence="1">
    <location>
        <position position="174"/>
    </location>
    <ligand>
        <name>Mg(2+)</name>
        <dbReference type="ChEBI" id="CHEBI:18420"/>
    </ligand>
</feature>
<feature type="binding site" evidence="1">
    <location>
        <begin position="192"/>
        <end position="196"/>
    </location>
    <ligand>
        <name>GTP</name>
        <dbReference type="ChEBI" id="CHEBI:37565"/>
    </ligand>
</feature>
<feature type="binding site" evidence="1">
    <location>
        <position position="194"/>
    </location>
    <ligand>
        <name>Mg(2+)</name>
        <dbReference type="ChEBI" id="CHEBI:18420"/>
    </ligand>
</feature>
<feature type="binding site" evidence="1">
    <location>
        <begin position="214"/>
        <end position="217"/>
    </location>
    <ligand>
        <name>GTP</name>
        <dbReference type="ChEBI" id="CHEBI:37565"/>
    </ligand>
</feature>
<feature type="binding site" evidence="1">
    <location>
        <begin position="284"/>
        <end position="287"/>
    </location>
    <ligand>
        <name>GTP</name>
        <dbReference type="ChEBI" id="CHEBI:37565"/>
    </ligand>
</feature>
<feature type="binding site" evidence="1">
    <location>
        <begin position="318"/>
        <end position="320"/>
    </location>
    <ligand>
        <name>GTP</name>
        <dbReference type="ChEBI" id="CHEBI:37565"/>
    </ligand>
</feature>
<reference key="1">
    <citation type="journal article" date="2008" name="DNA Res.">
        <title>Comparative genome analysis of Lactobacillus reuteri and Lactobacillus fermentum reveal a genomic island for reuterin and cobalamin production.</title>
        <authorList>
            <person name="Morita H."/>
            <person name="Toh H."/>
            <person name="Fukuda S."/>
            <person name="Horikawa H."/>
            <person name="Oshima K."/>
            <person name="Suzuki T."/>
            <person name="Murakami M."/>
            <person name="Hisamatsu S."/>
            <person name="Kato Y."/>
            <person name="Takizawa T."/>
            <person name="Fukuoka H."/>
            <person name="Yoshimura T."/>
            <person name="Itoh K."/>
            <person name="O'Sullivan D.J."/>
            <person name="McKay L.L."/>
            <person name="Ohno H."/>
            <person name="Kikuchi J."/>
            <person name="Masaoka T."/>
            <person name="Hattori M."/>
        </authorList>
    </citation>
    <scope>NUCLEOTIDE SEQUENCE [LARGE SCALE GENOMIC DNA]</scope>
    <source>
        <strain>JCM 1112</strain>
    </source>
</reference>
<proteinExistence type="inferred from homology"/>